<gene>
    <name evidence="1" type="primary">kdsA</name>
    <name type="ordered locus">SSPA1028</name>
</gene>
<name>KDSA_SALPK</name>
<evidence type="ECO:0000255" key="1">
    <source>
        <dbReference type="HAMAP-Rule" id="MF_00056"/>
    </source>
</evidence>
<dbReference type="EC" id="2.5.1.55" evidence="1"/>
<dbReference type="EMBL" id="FM200053">
    <property type="protein sequence ID" value="CAR59181.1"/>
    <property type="molecule type" value="Genomic_DNA"/>
</dbReference>
<dbReference type="RefSeq" id="WP_000811050.1">
    <property type="nucleotide sequence ID" value="NC_011147.1"/>
</dbReference>
<dbReference type="SMR" id="B5BI79"/>
<dbReference type="KEGG" id="sek:SSPA1028"/>
<dbReference type="HOGENOM" id="CLU_036666_0_0_6"/>
<dbReference type="UniPathway" id="UPA00030"/>
<dbReference type="UniPathway" id="UPA00357">
    <property type="reaction ID" value="UER00474"/>
</dbReference>
<dbReference type="Proteomes" id="UP000001869">
    <property type="component" value="Chromosome"/>
</dbReference>
<dbReference type="GO" id="GO:0005737">
    <property type="term" value="C:cytoplasm"/>
    <property type="evidence" value="ECO:0007669"/>
    <property type="project" value="UniProtKB-SubCell"/>
</dbReference>
<dbReference type="GO" id="GO:0008676">
    <property type="term" value="F:3-deoxy-8-phosphooctulonate synthase activity"/>
    <property type="evidence" value="ECO:0007669"/>
    <property type="project" value="UniProtKB-UniRule"/>
</dbReference>
<dbReference type="GO" id="GO:0019294">
    <property type="term" value="P:keto-3-deoxy-D-manno-octulosonic acid biosynthetic process"/>
    <property type="evidence" value="ECO:0007669"/>
    <property type="project" value="UniProtKB-UniRule"/>
</dbReference>
<dbReference type="FunFam" id="3.20.20.70:FF:000058">
    <property type="entry name" value="2-dehydro-3-deoxyphosphooctonate aldolase"/>
    <property type="match status" value="1"/>
</dbReference>
<dbReference type="Gene3D" id="3.20.20.70">
    <property type="entry name" value="Aldolase class I"/>
    <property type="match status" value="1"/>
</dbReference>
<dbReference type="HAMAP" id="MF_00056">
    <property type="entry name" value="KDO8P_synth"/>
    <property type="match status" value="1"/>
</dbReference>
<dbReference type="InterPro" id="IPR013785">
    <property type="entry name" value="Aldolase_TIM"/>
</dbReference>
<dbReference type="InterPro" id="IPR006218">
    <property type="entry name" value="DAHP1/KDSA"/>
</dbReference>
<dbReference type="InterPro" id="IPR006269">
    <property type="entry name" value="KDO8P_synthase"/>
</dbReference>
<dbReference type="NCBIfam" id="TIGR01362">
    <property type="entry name" value="KDO8P_synth"/>
    <property type="match status" value="1"/>
</dbReference>
<dbReference type="NCBIfam" id="NF003543">
    <property type="entry name" value="PRK05198.1"/>
    <property type="match status" value="1"/>
</dbReference>
<dbReference type="NCBIfam" id="NF009109">
    <property type="entry name" value="PRK12457.1"/>
    <property type="match status" value="1"/>
</dbReference>
<dbReference type="PANTHER" id="PTHR21057">
    <property type="entry name" value="PHOSPHO-2-DEHYDRO-3-DEOXYHEPTONATE ALDOLASE"/>
    <property type="match status" value="1"/>
</dbReference>
<dbReference type="Pfam" id="PF00793">
    <property type="entry name" value="DAHP_synth_1"/>
    <property type="match status" value="1"/>
</dbReference>
<dbReference type="SUPFAM" id="SSF51569">
    <property type="entry name" value="Aldolase"/>
    <property type="match status" value="1"/>
</dbReference>
<comment type="catalytic activity">
    <reaction evidence="1">
        <text>D-arabinose 5-phosphate + phosphoenolpyruvate + H2O = 3-deoxy-alpha-D-manno-2-octulosonate-8-phosphate + phosphate</text>
        <dbReference type="Rhea" id="RHEA:14053"/>
        <dbReference type="ChEBI" id="CHEBI:15377"/>
        <dbReference type="ChEBI" id="CHEBI:43474"/>
        <dbReference type="ChEBI" id="CHEBI:57693"/>
        <dbReference type="ChEBI" id="CHEBI:58702"/>
        <dbReference type="ChEBI" id="CHEBI:85985"/>
        <dbReference type="EC" id="2.5.1.55"/>
    </reaction>
</comment>
<comment type="pathway">
    <text evidence="1">Carbohydrate biosynthesis; 3-deoxy-D-manno-octulosonate biosynthesis; 3-deoxy-D-manno-octulosonate from D-ribulose 5-phosphate: step 2/3.</text>
</comment>
<comment type="pathway">
    <text evidence="1">Bacterial outer membrane biogenesis; lipopolysaccharide biosynthesis.</text>
</comment>
<comment type="subcellular location">
    <subcellularLocation>
        <location evidence="1">Cytoplasm</location>
    </subcellularLocation>
</comment>
<comment type="similarity">
    <text evidence="1">Belongs to the KdsA family.</text>
</comment>
<feature type="chain" id="PRO_1000091835" description="2-dehydro-3-deoxyphosphooctonate aldolase">
    <location>
        <begin position="1"/>
        <end position="284"/>
    </location>
</feature>
<keyword id="KW-0963">Cytoplasm</keyword>
<keyword id="KW-0448">Lipopolysaccharide biosynthesis</keyword>
<keyword id="KW-0808">Transferase</keyword>
<reference key="1">
    <citation type="journal article" date="2009" name="BMC Genomics">
        <title>Pseudogene accumulation in the evolutionary histories of Salmonella enterica serovars Paratyphi A and Typhi.</title>
        <authorList>
            <person name="Holt K.E."/>
            <person name="Thomson N.R."/>
            <person name="Wain J."/>
            <person name="Langridge G.C."/>
            <person name="Hasan R."/>
            <person name="Bhutta Z.A."/>
            <person name="Quail M.A."/>
            <person name="Norbertczak H."/>
            <person name="Walker D."/>
            <person name="Simmonds M."/>
            <person name="White B."/>
            <person name="Bason N."/>
            <person name="Mungall K."/>
            <person name="Dougan G."/>
            <person name="Parkhill J."/>
        </authorList>
    </citation>
    <scope>NUCLEOTIDE SEQUENCE [LARGE SCALE GENOMIC DNA]</scope>
    <source>
        <strain>AKU_12601</strain>
    </source>
</reference>
<proteinExistence type="inferred from homology"/>
<sequence>MKQKVVNIGDIKVANDLPFVLFGGMNVLESRDLAMRICEHYVTVTQKLGIPYVFKASFDKANRSSIHSYRGPGLEEGMKIFQELKQTFGVKVITDVHEASQVQPVADVVDVIQLPAFLARQTDLVEAMAKTGAVINVKKPQFVSPGQMGNIVDKFHEGGNDKVILCDRGANFGYDNLVVDMLGFSVMKKVSGNSPVIFDVTHALQCRDPFGAASGGRRGQVTELARAGMAVGLAGLFLESHPDPANAKCDGPSALPLAKLEQFLTQIKAIDDLVKSFDELDTEN</sequence>
<protein>
    <recommendedName>
        <fullName evidence="1">2-dehydro-3-deoxyphosphooctonate aldolase</fullName>
        <ecNumber evidence="1">2.5.1.55</ecNumber>
    </recommendedName>
    <alternativeName>
        <fullName evidence="1">3-deoxy-D-manno-octulosonic acid 8-phosphate synthase</fullName>
    </alternativeName>
    <alternativeName>
        <fullName evidence="1">KDO-8-phosphate synthase</fullName>
        <shortName evidence="1">KDO 8-P synthase</shortName>
        <shortName evidence="1">KDOPS</shortName>
    </alternativeName>
    <alternativeName>
        <fullName evidence="1">Phospho-2-dehydro-3-deoxyoctonate aldolase</fullName>
    </alternativeName>
</protein>
<organism>
    <name type="scientific">Salmonella paratyphi A (strain AKU_12601)</name>
    <dbReference type="NCBI Taxonomy" id="554290"/>
    <lineage>
        <taxon>Bacteria</taxon>
        <taxon>Pseudomonadati</taxon>
        <taxon>Pseudomonadota</taxon>
        <taxon>Gammaproteobacteria</taxon>
        <taxon>Enterobacterales</taxon>
        <taxon>Enterobacteriaceae</taxon>
        <taxon>Salmonella</taxon>
    </lineage>
</organism>
<accession>B5BI79</accession>